<organism>
    <name type="scientific">Mycobacterium tuberculosis (strain CDC 1551 / Oshkosh)</name>
    <dbReference type="NCBI Taxonomy" id="83331"/>
    <lineage>
        <taxon>Bacteria</taxon>
        <taxon>Bacillati</taxon>
        <taxon>Actinomycetota</taxon>
        <taxon>Actinomycetes</taxon>
        <taxon>Mycobacteriales</taxon>
        <taxon>Mycobacteriaceae</taxon>
        <taxon>Mycobacterium</taxon>
        <taxon>Mycobacterium tuberculosis complex</taxon>
    </lineage>
</organism>
<protein>
    <recommendedName>
        <fullName evidence="1">ESX-1 secretion-associated protein EspK</fullName>
    </recommendedName>
</protein>
<comment type="function">
    <text evidence="1">May act as a chaperone that facilitates EspB secretion through an interaction with EccCb1.</text>
</comment>
<comment type="subcellular location">
    <subcellularLocation>
        <location evidence="1">Cytoplasm</location>
    </subcellularLocation>
</comment>
<gene>
    <name evidence="1" type="primary">espK</name>
    <name type="ordered locus">MT3993</name>
</gene>
<keyword id="KW-0963">Cytoplasm</keyword>
<keyword id="KW-1185">Reference proteome</keyword>
<feature type="chain" id="PRO_0000427856" description="ESX-1 secretion-associated protein EspK">
    <location>
        <begin position="1"/>
        <end position="723"/>
    </location>
</feature>
<feature type="region of interest" description="Disordered" evidence="2">
    <location>
        <begin position="175"/>
        <end position="360"/>
    </location>
</feature>
<feature type="region of interest" description="Disordered" evidence="2">
    <location>
        <begin position="393"/>
        <end position="451"/>
    </location>
</feature>
<feature type="compositionally biased region" description="Low complexity" evidence="2">
    <location>
        <begin position="200"/>
        <end position="209"/>
    </location>
</feature>
<feature type="compositionally biased region" description="Pro residues" evidence="2">
    <location>
        <begin position="210"/>
        <end position="229"/>
    </location>
</feature>
<feature type="compositionally biased region" description="Low complexity" evidence="2">
    <location>
        <begin position="230"/>
        <end position="249"/>
    </location>
</feature>
<feature type="compositionally biased region" description="Pro residues" evidence="2">
    <location>
        <begin position="250"/>
        <end position="265"/>
    </location>
</feature>
<feature type="compositionally biased region" description="Pro residues" evidence="2">
    <location>
        <begin position="274"/>
        <end position="308"/>
    </location>
</feature>
<feature type="compositionally biased region" description="Low complexity" evidence="2">
    <location>
        <begin position="309"/>
        <end position="319"/>
    </location>
</feature>
<feature type="compositionally biased region" description="Low complexity" evidence="2">
    <location>
        <begin position="393"/>
        <end position="404"/>
    </location>
</feature>
<feature type="compositionally biased region" description="Low complexity" evidence="2">
    <location>
        <begin position="412"/>
        <end position="426"/>
    </location>
</feature>
<feature type="compositionally biased region" description="Basic and acidic residues" evidence="2">
    <location>
        <begin position="432"/>
        <end position="444"/>
    </location>
</feature>
<reference key="1">
    <citation type="journal article" date="2002" name="J. Bacteriol.">
        <title>Whole-genome comparison of Mycobacterium tuberculosis clinical and laboratory strains.</title>
        <authorList>
            <person name="Fleischmann R.D."/>
            <person name="Alland D."/>
            <person name="Eisen J.A."/>
            <person name="Carpenter L."/>
            <person name="White O."/>
            <person name="Peterson J.D."/>
            <person name="DeBoy R.T."/>
            <person name="Dodson R.J."/>
            <person name="Gwinn M.L."/>
            <person name="Haft D.H."/>
            <person name="Hickey E.K."/>
            <person name="Kolonay J.F."/>
            <person name="Nelson W.C."/>
            <person name="Umayam L.A."/>
            <person name="Ermolaeva M.D."/>
            <person name="Salzberg S.L."/>
            <person name="Delcher A."/>
            <person name="Utterback T.R."/>
            <person name="Weidman J.F."/>
            <person name="Khouri H.M."/>
            <person name="Gill J."/>
            <person name="Mikula A."/>
            <person name="Bishai W."/>
            <person name="Jacobs W.R. Jr."/>
            <person name="Venter J.C."/>
            <person name="Fraser C.M."/>
        </authorList>
    </citation>
    <scope>NUCLEOTIDE SEQUENCE [LARGE SCALE GENOMIC DNA]</scope>
    <source>
        <strain>CDC 1551 / Oshkosh</strain>
    </source>
</reference>
<proteinExistence type="inferred from homology"/>
<dbReference type="EMBL" id="AE000516">
    <property type="protein sequence ID" value="AAK48361.1"/>
    <property type="molecule type" value="Genomic_DNA"/>
</dbReference>
<dbReference type="PIR" id="E70803">
    <property type="entry name" value="E70803"/>
</dbReference>
<dbReference type="RefSeq" id="WP_010924728.1">
    <property type="nucleotide sequence ID" value="NZ_KK341228.1"/>
</dbReference>
<dbReference type="SMR" id="P9WJC0"/>
<dbReference type="KEGG" id="mtc:MT3993"/>
<dbReference type="PATRIC" id="fig|83331.31.peg.4296"/>
<dbReference type="HOGENOM" id="CLU_021845_0_0_11"/>
<dbReference type="Proteomes" id="UP000001020">
    <property type="component" value="Chromosome"/>
</dbReference>
<dbReference type="GO" id="GO:0005737">
    <property type="term" value="C:cytoplasm"/>
    <property type="evidence" value="ECO:0007669"/>
    <property type="project" value="UniProtKB-SubCell"/>
</dbReference>
<dbReference type="InterPro" id="IPR036689">
    <property type="entry name" value="ESAT-6-like_sf"/>
</dbReference>
<dbReference type="PANTHER" id="PTHR10068">
    <property type="entry name" value="BONE MARROW PROTEOGLYCAN"/>
    <property type="match status" value="1"/>
</dbReference>
<dbReference type="PANTHER" id="PTHR10068:SF14">
    <property type="entry name" value="CELL WALL ADHESIN EAP1"/>
    <property type="match status" value="1"/>
</dbReference>
<dbReference type="SUPFAM" id="SSF140453">
    <property type="entry name" value="EsxAB dimer-like"/>
    <property type="match status" value="1"/>
</dbReference>
<name>ESPK_MYCTO</name>
<evidence type="ECO:0000250" key="1">
    <source>
        <dbReference type="UniProtKB" id="P9WJC1"/>
    </source>
</evidence>
<evidence type="ECO:0000256" key="2">
    <source>
        <dbReference type="SAM" id="MobiDB-lite"/>
    </source>
</evidence>
<accession>P9WJC0</accession>
<accession>L0TDU5</accession>
<accession>O69743</accession>
<accession>Q8VIR7</accession>
<sequence>MSITRPTGSYARQMLDPGGWVEADEDTFYDRAQEYSQVLQRVTDVLDTCRQQKGHVFEGGLWSGGAANAANGALGANINQLMTLQDYLATVITWHRHIAGLIEQAKSDIGNNVDGAQREIDILENDPSLDADERHTAINSLVTATHGANVSLVAETAERVLESKNWKPPKNALEDLLQQKSPPPPDVPTLVVPSPGTPGTPGTPITPGTPITPIPGAPVTPITPTPGTPVTPVTPGKPVTPVTPVKPGTPGEPTPITPVTPPVAPATPATPATPVTPAPAPHPQPAPAPAPSPGPQPVTPATPGPSGPATPGTPGGEPAPHVKPAALAEQPGVPGQHAGGGTQSGPAHADESAASVTPAAASGVPGARAAAAAPSGTAVGAGARSSVGTAAASGAGSHAATGRAPVATSDKAAAPSTRAASARTAPPARPPSTDHIDKPDRSESADDGTPVSMIPVSAARAARDAATAAASARQRGRGDALRLARRIAAALNASDNNAGDYGFFWITAVTTDGSIVVANSYGLAYIPDGMELPNKVYLASADHAIPVDEIARCATYPVLAVQAWAAFHDMTLRAVIGTAEQLASSDPGVAKIVLEPDDIPESGKMTGRSRLEVVDPSAAAQLADTTDQRLLDLLPPAPVDVNPPGDERHMLWFELMKPMTSTATGREAAHLRAFRAYAAHSQEIALHQAHTATDAAVQRVAVADWLYWQYVTGLLDRALAAAS</sequence>